<keyword id="KW-0130">Cell adhesion</keyword>
<keyword id="KW-0393">Immunoglobulin domain</keyword>
<keyword id="KW-0514">Muscle protein</keyword>
<keyword id="KW-0597">Phosphoprotein</keyword>
<keyword id="KW-1267">Proteomics identification</keyword>
<keyword id="KW-1185">Reference proteome</keyword>
<keyword id="KW-0677">Repeat</keyword>
<keyword id="KW-0787">Thick filament</keyword>
<gene>
    <name type="primary">MYBPH</name>
</gene>
<reference key="1">
    <citation type="journal article" date="1993" name="Genomics">
        <title>Human myosin-binding protein H (MyBP-H): complete primary sequence, genomic organization, and chromosomal localization.</title>
        <authorList>
            <person name="Vaughan K.T."/>
            <person name="Weber F.E."/>
            <person name="Ried T."/>
            <person name="Ward D.C."/>
            <person name="Reinach F.C."/>
            <person name="Fischman D.A."/>
        </authorList>
    </citation>
    <scope>NUCLEOTIDE SEQUENCE [GENOMIC DNA / MRNA]</scope>
    <scope>VARIANTS HIS-48 AND GLY-49</scope>
    <source>
        <tissue>Skeletal muscle</tissue>
    </source>
</reference>
<reference key="2">
    <citation type="submission" date="1995-05" db="EMBL/GenBank/DDBJ databases">
        <title>Sequence of human myosin binding protein H gene.</title>
        <authorList>
            <person name="Whittle M.R."/>
            <person name="Fischman D.A."/>
            <person name="Reinach F.C."/>
        </authorList>
    </citation>
    <scope>NUCLEOTIDE SEQUENCE [GENOMIC DNA]</scope>
    <scope>VARIANTS HIS-48 AND GLY-49</scope>
</reference>
<reference key="3">
    <citation type="journal article" date="2004" name="Genome Res.">
        <title>The status, quality, and expansion of the NIH full-length cDNA project: the Mammalian Gene Collection (MGC).</title>
        <authorList>
            <consortium name="The MGC Project Team"/>
        </authorList>
    </citation>
    <scope>NUCLEOTIDE SEQUENCE [LARGE SCALE MRNA]</scope>
    <source>
        <tissue>Uterus</tissue>
    </source>
</reference>
<reference key="4">
    <citation type="journal article" date="2017" name="Circulation">
        <title>Experimental Modeling Supports a Role for MyBP-HL as a Novel Myofilament Component in Arrhythmia and Dilated Cardiomyopathy.</title>
        <authorList>
            <person name="Barefield D.Y."/>
            <person name="Puckelwartz M.J."/>
            <person name="Kim E.Y."/>
            <person name="Wilsbacher L.D."/>
            <person name="Vo A.H."/>
            <person name="Waters E.A."/>
            <person name="Earley J.U."/>
            <person name="Hadhazy M."/>
            <person name="Dellefave-Castillo L."/>
            <person name="Pesce L.L."/>
            <person name="McNally E.M."/>
        </authorList>
    </citation>
    <scope>TISSUE SPECIFICITY</scope>
</reference>
<reference key="5">
    <citation type="journal article" date="2019" name="Sci. Rep.">
        <title>Myosin binding protein H-like (MYBPHL): a promising biomarker to predict atrial damage.</title>
        <authorList>
            <person name="Lahm H."/>
            <person name="Dressen M."/>
            <person name="Beck N."/>
            <person name="Doppler S."/>
            <person name="Deutsch M.A."/>
            <person name="Matsushima S."/>
            <person name="Neb I."/>
            <person name="Koenig K.C."/>
            <person name="Sideris K."/>
            <person name="Voss S."/>
            <person name="Eschenbach L."/>
            <person name="Puluca N."/>
            <person name="Deisenhofer I."/>
            <person name="Doll S."/>
            <person name="Holdenrieder S."/>
            <person name="Mann M."/>
            <person name="Lange R."/>
            <person name="Krane M."/>
        </authorList>
    </citation>
    <scope>TISSUE SPECIFICITY</scope>
</reference>
<name>MYBPH_HUMAN</name>
<organism>
    <name type="scientific">Homo sapiens</name>
    <name type="common">Human</name>
    <dbReference type="NCBI Taxonomy" id="9606"/>
    <lineage>
        <taxon>Eukaryota</taxon>
        <taxon>Metazoa</taxon>
        <taxon>Chordata</taxon>
        <taxon>Craniata</taxon>
        <taxon>Vertebrata</taxon>
        <taxon>Euteleostomi</taxon>
        <taxon>Mammalia</taxon>
        <taxon>Eutheria</taxon>
        <taxon>Euarchontoglires</taxon>
        <taxon>Primates</taxon>
        <taxon>Haplorrhini</taxon>
        <taxon>Catarrhini</taxon>
        <taxon>Hominidae</taxon>
        <taxon>Homo</taxon>
    </lineage>
</organism>
<proteinExistence type="evidence at protein level"/>
<comment type="function">
    <text>Binds to myosin; probably involved in interaction with thick myofilaments in the A-band.</text>
</comment>
<comment type="interaction">
    <interactant intactId="EBI-5655165">
        <id>Q13203</id>
    </interactant>
    <interactant intactId="EBI-876651">
        <id>Q13464</id>
        <label>ROCK1</label>
    </interactant>
    <organismsDiffer>false</organismsDiffer>
    <experiments>2</experiments>
</comment>
<comment type="interaction">
    <interactant intactId="EBI-5655165">
        <id>Q13203</id>
    </interactant>
    <interactant intactId="EBI-681210">
        <id>Q8WZ42</id>
        <label>TTN</label>
    </interactant>
    <organismsDiffer>false</organismsDiffer>
    <experiments>3</experiments>
</comment>
<comment type="interaction">
    <interactant intactId="EBI-5655165">
        <id>Q13203</id>
    </interactant>
    <interactant intactId="EBI-34580071">
        <id>A0A8C0NIR0</id>
        <label>ROCK1</label>
    </interactant>
    <organismsDiffer>true</organismsDiffer>
    <experiments>2</experiments>
</comment>
<comment type="tissue specificity">
    <text evidence="4 5">Mainly expressed in the skeletal muscle. Slightly expressed in the left atrium and arteria mammaria interna.</text>
</comment>
<comment type="similarity">
    <text evidence="8">Belongs to the immunoglobulin superfamily. MyBP family.</text>
</comment>
<evidence type="ECO:0000250" key="1">
    <source>
        <dbReference type="UniProtKB" id="O88599"/>
    </source>
</evidence>
<evidence type="ECO:0000255" key="2">
    <source>
        <dbReference type="PROSITE-ProRule" id="PRU00316"/>
    </source>
</evidence>
<evidence type="ECO:0000256" key="3">
    <source>
        <dbReference type="SAM" id="MobiDB-lite"/>
    </source>
</evidence>
<evidence type="ECO:0000269" key="4">
    <source>
    </source>
</evidence>
<evidence type="ECO:0000269" key="5">
    <source>
    </source>
</evidence>
<evidence type="ECO:0000269" key="6">
    <source>
    </source>
</evidence>
<evidence type="ECO:0000269" key="7">
    <source ref="2"/>
</evidence>
<evidence type="ECO:0000305" key="8"/>
<protein>
    <recommendedName>
        <fullName>Myosin-binding protein H</fullName>
        <shortName>MyBP-H</shortName>
    </recommendedName>
    <alternativeName>
        <fullName>H-protein</fullName>
    </alternativeName>
</protein>
<sequence length="477" mass="52050">MMEKNTSEGPACSPEETASESAKVPTAEPPGEVAVSESTREEQVPKPQAPAPQAPTASTATKPAPPSEDVPSAPLLLTLDDVSSSSVTVSWEPPERLGRLGLQGYVLELCREGASEWVPVSARPMMVTQQTVRNLALGDKFLLRVSAVSSAGAGPPAMLDQPIHIRENIEAPKIRVPRHLRQTYIRQVGETVNLQIPFQGKPKPQATWTHNGHALDSQRVSMRTGDQDSILFIRSAQRSDSGRYELTVRVEDLEAKAVIDILVIEKPGPPSSIRLLDVWGCNAALQWTPPQDTGNTELLGYMVQKADKKTGQWFTVLERYHPTTCTISDLIIGNSYSFRVFSENLCGLSTSATVTKELAHIQKADIAAKPKGFIERDFSEAPSFTQPLADHTSTPGYSTQLFCSVRASPKPKIIWMKNKMEIQGNPKYRALSEQGVCTLEIRKPSPFDSGVYTCKAINVLGEASVDCRLEVKASAAH</sequence>
<feature type="chain" id="PRO_0000072698" description="Myosin-binding protein H">
    <location>
        <begin position="1"/>
        <end position="477"/>
    </location>
</feature>
<feature type="domain" description="Fibronectin type-III 1" evidence="2">
    <location>
        <begin position="73"/>
        <end position="168"/>
    </location>
</feature>
<feature type="domain" description="Ig-like C2-type 1">
    <location>
        <begin position="172"/>
        <end position="260"/>
    </location>
</feature>
<feature type="domain" description="Fibronectin type-III 2" evidence="2">
    <location>
        <begin position="269"/>
        <end position="364"/>
    </location>
</feature>
<feature type="domain" description="Ig-like C2-type 2">
    <location>
        <begin position="382"/>
        <end position="466"/>
    </location>
</feature>
<feature type="region of interest" description="Disordered" evidence="3">
    <location>
        <begin position="1"/>
        <end position="73"/>
    </location>
</feature>
<feature type="modified residue" description="Phosphothreonine" evidence="1">
    <location>
        <position position="6"/>
    </location>
</feature>
<feature type="modified residue" description="Phosphothreonine" evidence="1">
    <location>
        <position position="26"/>
    </location>
</feature>
<feature type="sequence variant" id="VAR_028181" description="In dbSNP:rs2788532." evidence="6 7">
    <original>Q</original>
    <variation>H</variation>
    <location>
        <position position="48"/>
    </location>
</feature>
<feature type="sequence variant" id="VAR_028182" description="In dbSNP:rs2791721." evidence="6 7">
    <original>A</original>
    <variation>G</variation>
    <location>
        <position position="49"/>
    </location>
</feature>
<feature type="sequence variant" id="VAR_028183" description="In dbSNP:rs2642531.">
    <original>A</original>
    <variation>G</variation>
    <location>
        <position position="114"/>
    </location>
</feature>
<feature type="sequence conflict" description="In Ref. 2; AAB86737." evidence="8" ref="2">
    <original>SS</original>
    <variation>RP</variation>
    <location>
        <begin position="149"/>
        <end position="150"/>
    </location>
</feature>
<feature type="sequence conflict" description="In Ref. 2; AAB86737." evidence="8" ref="2">
    <original>SS</original>
    <variation>CC</variation>
    <location>
        <begin position="271"/>
        <end position="272"/>
    </location>
</feature>
<feature type="sequence conflict" description="In Ref. 1; AAA36339." evidence="8" ref="1">
    <original>RASPKP</original>
    <variation>ELHQA</variation>
    <location>
        <begin position="406"/>
        <end position="411"/>
    </location>
</feature>
<dbReference type="EMBL" id="L05606">
    <property type="protein sequence ID" value="AAA36339.1"/>
    <property type="molecule type" value="mRNA"/>
</dbReference>
<dbReference type="EMBL" id="L05607">
    <property type="protein sequence ID" value="AAA02904.2"/>
    <property type="molecule type" value="Genomic_DNA"/>
</dbReference>
<dbReference type="EMBL" id="U27266">
    <property type="protein sequence ID" value="AAB86737.1"/>
    <property type="molecule type" value="Genomic_DNA"/>
</dbReference>
<dbReference type="EMBL" id="BC044226">
    <property type="protein sequence ID" value="AAH44226.1"/>
    <property type="molecule type" value="mRNA"/>
</dbReference>
<dbReference type="CCDS" id="CCDS30975.1"/>
<dbReference type="PIR" id="A46118">
    <property type="entry name" value="A46118"/>
</dbReference>
<dbReference type="RefSeq" id="NP_004988.2">
    <property type="nucleotide sequence ID" value="NM_004997.3"/>
</dbReference>
<dbReference type="SMR" id="Q13203"/>
<dbReference type="BioGRID" id="110693">
    <property type="interactions" value="9"/>
</dbReference>
<dbReference type="FunCoup" id="Q13203">
    <property type="interactions" value="59"/>
</dbReference>
<dbReference type="IntAct" id="Q13203">
    <property type="interactions" value="9"/>
</dbReference>
<dbReference type="MINT" id="Q13203"/>
<dbReference type="STRING" id="9606.ENSP00000255416"/>
<dbReference type="iPTMnet" id="Q13203"/>
<dbReference type="PhosphoSitePlus" id="Q13203"/>
<dbReference type="BioMuta" id="MYBPH"/>
<dbReference type="DMDM" id="116242667"/>
<dbReference type="jPOST" id="Q13203"/>
<dbReference type="MassIVE" id="Q13203"/>
<dbReference type="PaxDb" id="9606-ENSP00000255416"/>
<dbReference type="PeptideAtlas" id="Q13203"/>
<dbReference type="ProteomicsDB" id="59223"/>
<dbReference type="Antibodypedia" id="34541">
    <property type="antibodies" value="212 antibodies from 26 providers"/>
</dbReference>
<dbReference type="DNASU" id="4608"/>
<dbReference type="Ensembl" id="ENST00000255416.9">
    <property type="protein sequence ID" value="ENSP00000255416.4"/>
    <property type="gene ID" value="ENSG00000133055.10"/>
</dbReference>
<dbReference type="GeneID" id="4608"/>
<dbReference type="KEGG" id="hsa:4608"/>
<dbReference type="MANE-Select" id="ENST00000255416.9">
    <property type="protein sequence ID" value="ENSP00000255416.4"/>
    <property type="RefSeq nucleotide sequence ID" value="NM_004997.3"/>
    <property type="RefSeq protein sequence ID" value="NP_004988.2"/>
</dbReference>
<dbReference type="UCSC" id="uc001gzh.2">
    <property type="organism name" value="human"/>
</dbReference>
<dbReference type="AGR" id="HGNC:7552"/>
<dbReference type="CTD" id="4608"/>
<dbReference type="DisGeNET" id="4608"/>
<dbReference type="GeneCards" id="MYBPH"/>
<dbReference type="HGNC" id="HGNC:7552">
    <property type="gene designation" value="MYBPH"/>
</dbReference>
<dbReference type="HPA" id="ENSG00000133055">
    <property type="expression patterns" value="Tissue enhanced (salivary gland, skeletal muscle, tongue)"/>
</dbReference>
<dbReference type="MIM" id="160795">
    <property type="type" value="gene"/>
</dbReference>
<dbReference type="neXtProt" id="NX_Q13203"/>
<dbReference type="OpenTargets" id="ENSG00000133055"/>
<dbReference type="PharmGKB" id="PA31352"/>
<dbReference type="VEuPathDB" id="HostDB:ENSG00000133055"/>
<dbReference type="eggNOG" id="ENOG502QVIQ">
    <property type="taxonomic scope" value="Eukaryota"/>
</dbReference>
<dbReference type="GeneTree" id="ENSGT00940000158040"/>
<dbReference type="HOGENOM" id="CLU_037185_0_0_1"/>
<dbReference type="InParanoid" id="Q13203"/>
<dbReference type="OMA" id="LEWVPVN"/>
<dbReference type="OrthoDB" id="6107607at2759"/>
<dbReference type="PAN-GO" id="Q13203">
    <property type="GO annotations" value="0 GO annotations based on evolutionary models"/>
</dbReference>
<dbReference type="PhylomeDB" id="Q13203"/>
<dbReference type="TreeFam" id="TF334735"/>
<dbReference type="PathwayCommons" id="Q13203"/>
<dbReference type="SignaLink" id="Q13203"/>
<dbReference type="BioGRID-ORCS" id="4608">
    <property type="hits" value="10 hits in 1148 CRISPR screens"/>
</dbReference>
<dbReference type="GenomeRNAi" id="4608"/>
<dbReference type="Pharos" id="Q13203">
    <property type="development level" value="Tbio"/>
</dbReference>
<dbReference type="PRO" id="PR:Q13203"/>
<dbReference type="Proteomes" id="UP000005640">
    <property type="component" value="Chromosome 1"/>
</dbReference>
<dbReference type="RNAct" id="Q13203">
    <property type="molecule type" value="protein"/>
</dbReference>
<dbReference type="Bgee" id="ENSG00000133055">
    <property type="expression patterns" value="Expressed in gastrocnemius and 96 other cell types or tissues"/>
</dbReference>
<dbReference type="ExpressionAtlas" id="Q13203">
    <property type="expression patterns" value="baseline and differential"/>
</dbReference>
<dbReference type="GO" id="GO:0031430">
    <property type="term" value="C:M band"/>
    <property type="evidence" value="ECO:0000318"/>
    <property type="project" value="GO_Central"/>
</dbReference>
<dbReference type="GO" id="GO:0032982">
    <property type="term" value="C:myosin filament"/>
    <property type="evidence" value="ECO:0007669"/>
    <property type="project" value="UniProtKB-KW"/>
</dbReference>
<dbReference type="GO" id="GO:0008307">
    <property type="term" value="F:structural constituent of muscle"/>
    <property type="evidence" value="ECO:0000304"/>
    <property type="project" value="ProtInc"/>
</dbReference>
<dbReference type="GO" id="GO:0007155">
    <property type="term" value="P:cell adhesion"/>
    <property type="evidence" value="ECO:0007669"/>
    <property type="project" value="UniProtKB-KW"/>
</dbReference>
<dbReference type="GO" id="GO:0006942">
    <property type="term" value="P:regulation of striated muscle contraction"/>
    <property type="evidence" value="ECO:0000304"/>
    <property type="project" value="ProtInc"/>
</dbReference>
<dbReference type="GO" id="GO:0045214">
    <property type="term" value="P:sarcomere organization"/>
    <property type="evidence" value="ECO:0000318"/>
    <property type="project" value="GO_Central"/>
</dbReference>
<dbReference type="CDD" id="cd00063">
    <property type="entry name" value="FN3"/>
    <property type="match status" value="2"/>
</dbReference>
<dbReference type="FunFam" id="2.60.40.10:FF:000557">
    <property type="entry name" value="Myosin binding protein Ha"/>
    <property type="match status" value="1"/>
</dbReference>
<dbReference type="FunFam" id="2.60.40.10:FF:000225">
    <property type="entry name" value="Myosin-binding protein C, cardiac-type"/>
    <property type="match status" value="1"/>
</dbReference>
<dbReference type="FunFam" id="2.60.40.10:FF:000031">
    <property type="entry name" value="Myosin-binding protein C, slow type"/>
    <property type="match status" value="1"/>
</dbReference>
<dbReference type="FunFam" id="2.60.40.10:FF:000062">
    <property type="entry name" value="Myosin-binding protein C, slow type"/>
    <property type="match status" value="1"/>
</dbReference>
<dbReference type="Gene3D" id="2.60.40.10">
    <property type="entry name" value="Immunoglobulins"/>
    <property type="match status" value="4"/>
</dbReference>
<dbReference type="InterPro" id="IPR003961">
    <property type="entry name" value="FN3_dom"/>
</dbReference>
<dbReference type="InterPro" id="IPR036116">
    <property type="entry name" value="FN3_sf"/>
</dbReference>
<dbReference type="InterPro" id="IPR007110">
    <property type="entry name" value="Ig-like_dom"/>
</dbReference>
<dbReference type="InterPro" id="IPR036179">
    <property type="entry name" value="Ig-like_dom_sf"/>
</dbReference>
<dbReference type="InterPro" id="IPR013783">
    <property type="entry name" value="Ig-like_fold"/>
</dbReference>
<dbReference type="InterPro" id="IPR013098">
    <property type="entry name" value="Ig_I-set"/>
</dbReference>
<dbReference type="InterPro" id="IPR003599">
    <property type="entry name" value="Ig_sub"/>
</dbReference>
<dbReference type="InterPro" id="IPR003598">
    <property type="entry name" value="Ig_sub2"/>
</dbReference>
<dbReference type="InterPro" id="IPR050964">
    <property type="entry name" value="Striated_Muscle_Regulatory"/>
</dbReference>
<dbReference type="PANTHER" id="PTHR13817:SF171">
    <property type="entry name" value="STRETCHIN-MLCK, ISOFORM U"/>
    <property type="match status" value="1"/>
</dbReference>
<dbReference type="PANTHER" id="PTHR13817">
    <property type="entry name" value="TITIN"/>
    <property type="match status" value="1"/>
</dbReference>
<dbReference type="Pfam" id="PF00041">
    <property type="entry name" value="fn3"/>
    <property type="match status" value="2"/>
</dbReference>
<dbReference type="Pfam" id="PF07679">
    <property type="entry name" value="I-set"/>
    <property type="match status" value="2"/>
</dbReference>
<dbReference type="PRINTS" id="PR00014">
    <property type="entry name" value="FNTYPEIII"/>
</dbReference>
<dbReference type="SMART" id="SM00060">
    <property type="entry name" value="FN3"/>
    <property type="match status" value="2"/>
</dbReference>
<dbReference type="SMART" id="SM00409">
    <property type="entry name" value="IG"/>
    <property type="match status" value="2"/>
</dbReference>
<dbReference type="SMART" id="SM00408">
    <property type="entry name" value="IGc2"/>
    <property type="match status" value="2"/>
</dbReference>
<dbReference type="SUPFAM" id="SSF49265">
    <property type="entry name" value="Fibronectin type III"/>
    <property type="match status" value="1"/>
</dbReference>
<dbReference type="SUPFAM" id="SSF48726">
    <property type="entry name" value="Immunoglobulin"/>
    <property type="match status" value="2"/>
</dbReference>
<dbReference type="PROSITE" id="PS50853">
    <property type="entry name" value="FN3"/>
    <property type="match status" value="2"/>
</dbReference>
<dbReference type="PROSITE" id="PS50835">
    <property type="entry name" value="IG_LIKE"/>
    <property type="match status" value="2"/>
</dbReference>
<accession>Q13203</accession>
<accession>Q16886</accession>
<accession>Q86YC5</accession>